<evidence type="ECO:0000255" key="1">
    <source>
        <dbReference type="HAMAP-Rule" id="MF_01620"/>
    </source>
</evidence>
<keyword id="KW-0012">Acyltransferase</keyword>
<keyword id="KW-0963">Cytoplasm</keyword>
<keyword id="KW-0276">Fatty acid metabolism</keyword>
<keyword id="KW-0442">Lipid degradation</keyword>
<keyword id="KW-0443">Lipid metabolism</keyword>
<keyword id="KW-0808">Transferase</keyword>
<protein>
    <recommendedName>
        <fullName evidence="1">3-ketoacyl-CoA thiolase</fullName>
        <ecNumber evidence="1">2.3.1.16</ecNumber>
    </recommendedName>
    <alternativeName>
        <fullName evidence="1">Acetyl-CoA acyltransferase</fullName>
    </alternativeName>
    <alternativeName>
        <fullName evidence="1">Beta-ketothiolase</fullName>
    </alternativeName>
    <alternativeName>
        <fullName evidence="1">Fatty acid oxidation complex subunit beta</fullName>
    </alternativeName>
</protein>
<proteinExistence type="inferred from homology"/>
<name>FADA_SHESA</name>
<sequence length="387" mass="40653">MKQAVIVDCIRTPMGRSKAGVFRNVRAETLSAELMKGLLLRNPQLDPNTIEDVIWGCVQQTLEQGFNIARNASLLAGIPKTAGAVTVNRLCGSSMEAIHQAARAIMTGMGDTFIIGGVEHMGHVPMNHGVDFHPGLANNVAKASGMMGLTAEMLGKLHGITREQQDAFAVRSHQRAHAATVEGRFAKEIYGIEGHDANGALIKVLHDEVIRPETSMESLAALRPVFDPANGTVTAGTSSALSDGASAMLVMEESKARALGLPIRARIRSMAVAGCDAAIMGYGPVPATQKALARAGITVNDLDVIELNEAFAAQSLPCVKDLGLLDVVEDKINLNGGAIALGHPLGCSGARISTTLINLMEHKDATLGLATMCIGLGQGIATVFERV</sequence>
<feature type="chain" id="PRO_0000292904" description="3-ketoacyl-CoA thiolase">
    <location>
        <begin position="1"/>
        <end position="387"/>
    </location>
</feature>
<feature type="active site" description="Acyl-thioester intermediate" evidence="1">
    <location>
        <position position="91"/>
    </location>
</feature>
<feature type="active site" description="Proton acceptor" evidence="1">
    <location>
        <position position="343"/>
    </location>
</feature>
<feature type="active site" description="Proton acceptor" evidence="1">
    <location>
        <position position="373"/>
    </location>
</feature>
<accession>A0KR49</accession>
<reference key="1">
    <citation type="submission" date="2006-09" db="EMBL/GenBank/DDBJ databases">
        <title>Complete sequence of chromosome 1 of Shewanella sp. ANA-3.</title>
        <authorList>
            <person name="Copeland A."/>
            <person name="Lucas S."/>
            <person name="Lapidus A."/>
            <person name="Barry K."/>
            <person name="Detter J.C."/>
            <person name="Glavina del Rio T."/>
            <person name="Hammon N."/>
            <person name="Israni S."/>
            <person name="Dalin E."/>
            <person name="Tice H."/>
            <person name="Pitluck S."/>
            <person name="Chertkov O."/>
            <person name="Brettin T."/>
            <person name="Bruce D."/>
            <person name="Han C."/>
            <person name="Tapia R."/>
            <person name="Gilna P."/>
            <person name="Schmutz J."/>
            <person name="Larimer F."/>
            <person name="Land M."/>
            <person name="Hauser L."/>
            <person name="Kyrpides N."/>
            <person name="Kim E."/>
            <person name="Newman D."/>
            <person name="Salticov C."/>
            <person name="Konstantinidis K."/>
            <person name="Klappenback J."/>
            <person name="Tiedje J."/>
            <person name="Richardson P."/>
        </authorList>
    </citation>
    <scope>NUCLEOTIDE SEQUENCE [LARGE SCALE GENOMIC DNA]</scope>
    <source>
        <strain>ANA-3</strain>
    </source>
</reference>
<gene>
    <name evidence="1" type="primary">fadA</name>
    <name type="ordered locus">Shewana3_0023</name>
</gene>
<organism>
    <name type="scientific">Shewanella sp. (strain ANA-3)</name>
    <dbReference type="NCBI Taxonomy" id="94122"/>
    <lineage>
        <taxon>Bacteria</taxon>
        <taxon>Pseudomonadati</taxon>
        <taxon>Pseudomonadota</taxon>
        <taxon>Gammaproteobacteria</taxon>
        <taxon>Alteromonadales</taxon>
        <taxon>Shewanellaceae</taxon>
        <taxon>Shewanella</taxon>
    </lineage>
</organism>
<comment type="function">
    <text evidence="1">Catalyzes the final step of fatty acid oxidation in which acetyl-CoA is released and the CoA ester of a fatty acid two carbons shorter is formed.</text>
</comment>
<comment type="catalytic activity">
    <reaction evidence="1">
        <text>an acyl-CoA + acetyl-CoA = a 3-oxoacyl-CoA + CoA</text>
        <dbReference type="Rhea" id="RHEA:21564"/>
        <dbReference type="ChEBI" id="CHEBI:57287"/>
        <dbReference type="ChEBI" id="CHEBI:57288"/>
        <dbReference type="ChEBI" id="CHEBI:58342"/>
        <dbReference type="ChEBI" id="CHEBI:90726"/>
        <dbReference type="EC" id="2.3.1.16"/>
    </reaction>
</comment>
<comment type="pathway">
    <text evidence="1">Lipid metabolism; fatty acid beta-oxidation.</text>
</comment>
<comment type="subunit">
    <text evidence="1">Heterotetramer of two alpha chains (FadB) and two beta chains (FadA).</text>
</comment>
<comment type="subcellular location">
    <subcellularLocation>
        <location evidence="1">Cytoplasm</location>
    </subcellularLocation>
</comment>
<comment type="similarity">
    <text evidence="1">Belongs to the thiolase-like superfamily. Thiolase family.</text>
</comment>
<dbReference type="EC" id="2.3.1.16" evidence="1"/>
<dbReference type="EMBL" id="CP000469">
    <property type="protein sequence ID" value="ABK46268.1"/>
    <property type="molecule type" value="Genomic_DNA"/>
</dbReference>
<dbReference type="RefSeq" id="WP_011715316.1">
    <property type="nucleotide sequence ID" value="NC_008577.1"/>
</dbReference>
<dbReference type="SMR" id="A0KR49"/>
<dbReference type="STRING" id="94122.Shewana3_0023"/>
<dbReference type="GeneID" id="94725991"/>
<dbReference type="KEGG" id="shn:Shewana3_0023"/>
<dbReference type="eggNOG" id="COG0183">
    <property type="taxonomic scope" value="Bacteria"/>
</dbReference>
<dbReference type="HOGENOM" id="CLU_031026_2_3_6"/>
<dbReference type="OrthoDB" id="8951704at2"/>
<dbReference type="UniPathway" id="UPA00659"/>
<dbReference type="Proteomes" id="UP000002589">
    <property type="component" value="Chromosome"/>
</dbReference>
<dbReference type="GO" id="GO:0005737">
    <property type="term" value="C:cytoplasm"/>
    <property type="evidence" value="ECO:0007669"/>
    <property type="project" value="UniProtKB-SubCell"/>
</dbReference>
<dbReference type="GO" id="GO:0003988">
    <property type="term" value="F:acetyl-CoA C-acyltransferase activity"/>
    <property type="evidence" value="ECO:0007669"/>
    <property type="project" value="UniProtKB-UniRule"/>
</dbReference>
<dbReference type="GO" id="GO:0006635">
    <property type="term" value="P:fatty acid beta-oxidation"/>
    <property type="evidence" value="ECO:0007669"/>
    <property type="project" value="UniProtKB-UniRule"/>
</dbReference>
<dbReference type="GO" id="GO:0010124">
    <property type="term" value="P:phenylacetate catabolic process"/>
    <property type="evidence" value="ECO:0007669"/>
    <property type="project" value="TreeGrafter"/>
</dbReference>
<dbReference type="CDD" id="cd00751">
    <property type="entry name" value="thiolase"/>
    <property type="match status" value="1"/>
</dbReference>
<dbReference type="FunFam" id="3.40.47.10:FF:000010">
    <property type="entry name" value="Acetyl-CoA acetyltransferase (Thiolase)"/>
    <property type="match status" value="1"/>
</dbReference>
<dbReference type="Gene3D" id="3.40.47.10">
    <property type="match status" value="2"/>
</dbReference>
<dbReference type="HAMAP" id="MF_01620">
    <property type="entry name" value="FadA"/>
    <property type="match status" value="1"/>
</dbReference>
<dbReference type="InterPro" id="IPR012805">
    <property type="entry name" value="FadA"/>
</dbReference>
<dbReference type="InterPro" id="IPR002155">
    <property type="entry name" value="Thiolase"/>
</dbReference>
<dbReference type="InterPro" id="IPR016039">
    <property type="entry name" value="Thiolase-like"/>
</dbReference>
<dbReference type="InterPro" id="IPR050215">
    <property type="entry name" value="Thiolase-like_sf_Thiolase"/>
</dbReference>
<dbReference type="InterPro" id="IPR020615">
    <property type="entry name" value="Thiolase_acyl_enz_int_AS"/>
</dbReference>
<dbReference type="InterPro" id="IPR020610">
    <property type="entry name" value="Thiolase_AS"/>
</dbReference>
<dbReference type="InterPro" id="IPR020617">
    <property type="entry name" value="Thiolase_C"/>
</dbReference>
<dbReference type="InterPro" id="IPR020613">
    <property type="entry name" value="Thiolase_CS"/>
</dbReference>
<dbReference type="InterPro" id="IPR020616">
    <property type="entry name" value="Thiolase_N"/>
</dbReference>
<dbReference type="NCBIfam" id="TIGR01930">
    <property type="entry name" value="AcCoA-C-Actrans"/>
    <property type="match status" value="1"/>
</dbReference>
<dbReference type="NCBIfam" id="TIGR02445">
    <property type="entry name" value="fadA"/>
    <property type="match status" value="1"/>
</dbReference>
<dbReference type="NCBIfam" id="NF006510">
    <property type="entry name" value="PRK08947.1"/>
    <property type="match status" value="1"/>
</dbReference>
<dbReference type="PANTHER" id="PTHR43853:SF11">
    <property type="entry name" value="3-KETOACYL-COA THIOLASE FADA"/>
    <property type="match status" value="1"/>
</dbReference>
<dbReference type="PANTHER" id="PTHR43853">
    <property type="entry name" value="3-KETOACYL-COA THIOLASE, PEROXISOMAL"/>
    <property type="match status" value="1"/>
</dbReference>
<dbReference type="Pfam" id="PF02803">
    <property type="entry name" value="Thiolase_C"/>
    <property type="match status" value="1"/>
</dbReference>
<dbReference type="Pfam" id="PF00108">
    <property type="entry name" value="Thiolase_N"/>
    <property type="match status" value="1"/>
</dbReference>
<dbReference type="PIRSF" id="PIRSF000429">
    <property type="entry name" value="Ac-CoA_Ac_transf"/>
    <property type="match status" value="1"/>
</dbReference>
<dbReference type="SUPFAM" id="SSF53901">
    <property type="entry name" value="Thiolase-like"/>
    <property type="match status" value="2"/>
</dbReference>
<dbReference type="PROSITE" id="PS00098">
    <property type="entry name" value="THIOLASE_1"/>
    <property type="match status" value="1"/>
</dbReference>
<dbReference type="PROSITE" id="PS00737">
    <property type="entry name" value="THIOLASE_2"/>
    <property type="match status" value="1"/>
</dbReference>
<dbReference type="PROSITE" id="PS00099">
    <property type="entry name" value="THIOLASE_3"/>
    <property type="match status" value="1"/>
</dbReference>